<comment type="function">
    <text evidence="1">Produces ATP from ADP in the presence of a proton gradient across the membrane. The catalytic sites are hosted primarily by the beta subunits.</text>
</comment>
<comment type="catalytic activity">
    <reaction evidence="1">
        <text>ATP + H2O + 4 H(+)(in) = ADP + phosphate + 5 H(+)(out)</text>
        <dbReference type="Rhea" id="RHEA:57720"/>
        <dbReference type="ChEBI" id="CHEBI:15377"/>
        <dbReference type="ChEBI" id="CHEBI:15378"/>
        <dbReference type="ChEBI" id="CHEBI:30616"/>
        <dbReference type="ChEBI" id="CHEBI:43474"/>
        <dbReference type="ChEBI" id="CHEBI:456216"/>
        <dbReference type="EC" id="7.1.2.2"/>
    </reaction>
</comment>
<comment type="subunit">
    <text evidence="1">F-type ATPases have 2 components, CF(1) - the catalytic core - and CF(0) - the membrane proton channel. CF(1) has five subunits: alpha(3), beta(3), gamma(1), delta(1), epsilon(1). CF(0) has three main subunits: a(1), b(2) and c(9-12). The alpha and beta chains form an alternating ring which encloses part of the gamma chain. CF(1) is attached to CF(0) by a central stalk formed by the gamma and epsilon chains, while a peripheral stalk is formed by the delta and b chains.</text>
</comment>
<comment type="subcellular location">
    <subcellularLocation>
        <location evidence="1">Cell membrane</location>
        <topology evidence="1">Peripheral membrane protein</topology>
    </subcellularLocation>
</comment>
<comment type="similarity">
    <text evidence="1">Belongs to the ATPase alpha/beta chains family.</text>
</comment>
<feature type="chain" id="PRO_0000339520" description="ATP synthase subunit beta">
    <location>
        <begin position="1"/>
        <end position="463"/>
    </location>
</feature>
<feature type="binding site" evidence="1">
    <location>
        <begin position="151"/>
        <end position="158"/>
    </location>
    <ligand>
        <name>ATP</name>
        <dbReference type="ChEBI" id="CHEBI:30616"/>
    </ligand>
</feature>
<gene>
    <name evidence="1" type="primary">atpD</name>
    <name type="ordered locus">CLD_0629</name>
</gene>
<reference key="1">
    <citation type="journal article" date="2007" name="PLoS ONE">
        <title>Analysis of the neurotoxin complex genes in Clostridium botulinum A1-A4 and B1 strains: BoNT/A3, /Ba4 and /B1 clusters are located within plasmids.</title>
        <authorList>
            <person name="Smith T.J."/>
            <person name="Hill K.K."/>
            <person name="Foley B.T."/>
            <person name="Detter J.C."/>
            <person name="Munk A.C."/>
            <person name="Bruce D.C."/>
            <person name="Doggett N.A."/>
            <person name="Smith L.A."/>
            <person name="Marks J.D."/>
            <person name="Xie G."/>
            <person name="Brettin T.S."/>
        </authorList>
    </citation>
    <scope>NUCLEOTIDE SEQUENCE [LARGE SCALE GENOMIC DNA]</scope>
    <source>
        <strain>Okra / Type B1</strain>
    </source>
</reference>
<name>ATPB_CLOBK</name>
<evidence type="ECO:0000255" key="1">
    <source>
        <dbReference type="HAMAP-Rule" id="MF_01347"/>
    </source>
</evidence>
<protein>
    <recommendedName>
        <fullName evidence="1">ATP synthase subunit beta</fullName>
        <ecNumber evidence="1">7.1.2.2</ecNumber>
    </recommendedName>
    <alternativeName>
        <fullName evidence="1">ATP synthase F1 sector subunit beta</fullName>
    </alternativeName>
    <alternativeName>
        <fullName evidence="1">F-ATPase subunit beta</fullName>
    </alternativeName>
</protein>
<accession>B1IE34</accession>
<proteinExistence type="inferred from homology"/>
<sequence>MSNLGKVIQIIGPIIDIKFDSENLPDLFNALEINAGDRKVIAEVEQHIGDDTIRAIAMEDTEGLKRGMEALDTGKSVSVPVGKEVLGRLFNVLGKPIDGAGEFTSEESYPIHRPAPSFEEQSVEPEIFETGIKVIDLLAPYQKGGKIGLFGGAGVGKTVLIQELINNIAKEHGGLSVFTGVGERTREGNDLYYEMKESGVLEKTALVFGQMNEPPGARMRVALTGLTMSEYFRDQGQDVLLFIDNIFRFTQAGSEVSALLGRIPSAVGYQPTLATEMGALQERITSTKNGSITSVQAVYVPADDLTDPAPATTFAHLDATTVLSRAITELGIYPAVDPLESSSRMLDPRIIGEEHYEVAIKVKNILERYRELQDIIAILGIDELSEEDKLVVGRARKIQRFLSQPFTVAEQFTGMQGKYVPIKETVRGFKEILEGKHDNIPESAFLFQGTIEDVLKKAQQMEI</sequence>
<organism>
    <name type="scientific">Clostridium botulinum (strain Okra / Type B1)</name>
    <dbReference type="NCBI Taxonomy" id="498213"/>
    <lineage>
        <taxon>Bacteria</taxon>
        <taxon>Bacillati</taxon>
        <taxon>Bacillota</taxon>
        <taxon>Clostridia</taxon>
        <taxon>Eubacteriales</taxon>
        <taxon>Clostridiaceae</taxon>
        <taxon>Clostridium</taxon>
    </lineage>
</organism>
<dbReference type="EC" id="7.1.2.2" evidence="1"/>
<dbReference type="EMBL" id="CP000939">
    <property type="protein sequence ID" value="ACA45325.1"/>
    <property type="molecule type" value="Genomic_DNA"/>
</dbReference>
<dbReference type="SMR" id="B1IE34"/>
<dbReference type="KEGG" id="cbb:CLD_0629"/>
<dbReference type="HOGENOM" id="CLU_022398_0_2_9"/>
<dbReference type="Proteomes" id="UP000008541">
    <property type="component" value="Chromosome"/>
</dbReference>
<dbReference type="GO" id="GO:0005886">
    <property type="term" value="C:plasma membrane"/>
    <property type="evidence" value="ECO:0007669"/>
    <property type="project" value="UniProtKB-SubCell"/>
</dbReference>
<dbReference type="GO" id="GO:0045259">
    <property type="term" value="C:proton-transporting ATP synthase complex"/>
    <property type="evidence" value="ECO:0007669"/>
    <property type="project" value="UniProtKB-KW"/>
</dbReference>
<dbReference type="GO" id="GO:0005524">
    <property type="term" value="F:ATP binding"/>
    <property type="evidence" value="ECO:0007669"/>
    <property type="project" value="UniProtKB-UniRule"/>
</dbReference>
<dbReference type="GO" id="GO:0016887">
    <property type="term" value="F:ATP hydrolysis activity"/>
    <property type="evidence" value="ECO:0007669"/>
    <property type="project" value="InterPro"/>
</dbReference>
<dbReference type="GO" id="GO:0046933">
    <property type="term" value="F:proton-transporting ATP synthase activity, rotational mechanism"/>
    <property type="evidence" value="ECO:0007669"/>
    <property type="project" value="UniProtKB-UniRule"/>
</dbReference>
<dbReference type="CDD" id="cd18110">
    <property type="entry name" value="ATP-synt_F1_beta_C"/>
    <property type="match status" value="1"/>
</dbReference>
<dbReference type="CDD" id="cd18115">
    <property type="entry name" value="ATP-synt_F1_beta_N"/>
    <property type="match status" value="1"/>
</dbReference>
<dbReference type="CDD" id="cd01133">
    <property type="entry name" value="F1-ATPase_beta_CD"/>
    <property type="match status" value="1"/>
</dbReference>
<dbReference type="FunFam" id="1.10.1140.10:FF:000001">
    <property type="entry name" value="ATP synthase subunit beta"/>
    <property type="match status" value="1"/>
</dbReference>
<dbReference type="FunFam" id="3.40.50.300:FF:000026">
    <property type="entry name" value="ATP synthase subunit beta"/>
    <property type="match status" value="1"/>
</dbReference>
<dbReference type="Gene3D" id="2.40.10.170">
    <property type="match status" value="1"/>
</dbReference>
<dbReference type="Gene3D" id="1.10.1140.10">
    <property type="entry name" value="Bovine Mitochondrial F1-atpase, Atp Synthase Beta Chain, Chain D, domain 3"/>
    <property type="match status" value="1"/>
</dbReference>
<dbReference type="Gene3D" id="3.40.50.300">
    <property type="entry name" value="P-loop containing nucleotide triphosphate hydrolases"/>
    <property type="match status" value="1"/>
</dbReference>
<dbReference type="HAMAP" id="MF_01347">
    <property type="entry name" value="ATP_synth_beta_bact"/>
    <property type="match status" value="1"/>
</dbReference>
<dbReference type="InterPro" id="IPR003593">
    <property type="entry name" value="AAA+_ATPase"/>
</dbReference>
<dbReference type="InterPro" id="IPR055190">
    <property type="entry name" value="ATP-synt_VA_C"/>
</dbReference>
<dbReference type="InterPro" id="IPR005722">
    <property type="entry name" value="ATP_synth_F1_bsu"/>
</dbReference>
<dbReference type="InterPro" id="IPR020003">
    <property type="entry name" value="ATPase_a/bsu_AS"/>
</dbReference>
<dbReference type="InterPro" id="IPR050053">
    <property type="entry name" value="ATPase_alpha/beta_chains"/>
</dbReference>
<dbReference type="InterPro" id="IPR004100">
    <property type="entry name" value="ATPase_F1/V1/A1_a/bsu_N"/>
</dbReference>
<dbReference type="InterPro" id="IPR036121">
    <property type="entry name" value="ATPase_F1/V1/A1_a/bsu_N_sf"/>
</dbReference>
<dbReference type="InterPro" id="IPR000194">
    <property type="entry name" value="ATPase_F1/V1/A1_a/bsu_nucl-bd"/>
</dbReference>
<dbReference type="InterPro" id="IPR024034">
    <property type="entry name" value="ATPase_F1/V1_b/a_C"/>
</dbReference>
<dbReference type="InterPro" id="IPR027417">
    <property type="entry name" value="P-loop_NTPase"/>
</dbReference>
<dbReference type="NCBIfam" id="TIGR01039">
    <property type="entry name" value="atpD"/>
    <property type="match status" value="1"/>
</dbReference>
<dbReference type="PANTHER" id="PTHR15184">
    <property type="entry name" value="ATP SYNTHASE"/>
    <property type="match status" value="1"/>
</dbReference>
<dbReference type="PANTHER" id="PTHR15184:SF71">
    <property type="entry name" value="ATP SYNTHASE SUBUNIT BETA, MITOCHONDRIAL"/>
    <property type="match status" value="1"/>
</dbReference>
<dbReference type="Pfam" id="PF00006">
    <property type="entry name" value="ATP-synt_ab"/>
    <property type="match status" value="1"/>
</dbReference>
<dbReference type="Pfam" id="PF02874">
    <property type="entry name" value="ATP-synt_ab_N"/>
    <property type="match status" value="1"/>
</dbReference>
<dbReference type="Pfam" id="PF22919">
    <property type="entry name" value="ATP-synt_VA_C"/>
    <property type="match status" value="1"/>
</dbReference>
<dbReference type="SMART" id="SM00382">
    <property type="entry name" value="AAA"/>
    <property type="match status" value="1"/>
</dbReference>
<dbReference type="SUPFAM" id="SSF47917">
    <property type="entry name" value="C-terminal domain of alpha and beta subunits of F1 ATP synthase"/>
    <property type="match status" value="1"/>
</dbReference>
<dbReference type="SUPFAM" id="SSF50615">
    <property type="entry name" value="N-terminal domain of alpha and beta subunits of F1 ATP synthase"/>
    <property type="match status" value="1"/>
</dbReference>
<dbReference type="SUPFAM" id="SSF52540">
    <property type="entry name" value="P-loop containing nucleoside triphosphate hydrolases"/>
    <property type="match status" value="1"/>
</dbReference>
<dbReference type="PROSITE" id="PS00152">
    <property type="entry name" value="ATPASE_ALPHA_BETA"/>
    <property type="match status" value="1"/>
</dbReference>
<keyword id="KW-0066">ATP synthesis</keyword>
<keyword id="KW-0067">ATP-binding</keyword>
<keyword id="KW-1003">Cell membrane</keyword>
<keyword id="KW-0139">CF(1)</keyword>
<keyword id="KW-0375">Hydrogen ion transport</keyword>
<keyword id="KW-0406">Ion transport</keyword>
<keyword id="KW-0472">Membrane</keyword>
<keyword id="KW-0547">Nucleotide-binding</keyword>
<keyword id="KW-1278">Translocase</keyword>
<keyword id="KW-0813">Transport</keyword>